<sequence length="364" mass="41472">MKRNLNENSTRSTAGCLPVPLFNQKKRNRQPLTSNPCTNDPGISNASDNYDFPPLPSDWAWEAVNPELPPLTKTVNTGQIPHSVSNSLRSQDSLSKPIQSNAGSSKSDWSYRDGNKNTSLKTWDKNDFKPQCKRRNLMTNNGINSGPINLGAQQQKQLRVSESTNLPNQRESEALRQTKSSEIPGSTMRSLDKNSTLQAFKPNFQQNQFKKKMLDGFQEVNTLKKEASSYQLKLREKDNSLRIISAVIESMKYWREHVQKTVLLFEILAVLDSAVRPGPYCSKTFLMRDGKHTLPCVFYEIDRELPRLIRGRVHRCVGNYDQKKNIFKCVSVRPASASEQKTFQAFVKIVDAEMRYYTSVMNEV</sequence>
<feature type="chain" id="PRO_0000251604" description="Spermatogenesis-associated protein 22">
    <location>
        <begin position="1"/>
        <end position="364"/>
    </location>
</feature>
<feature type="region of interest" description="Disordered" evidence="3">
    <location>
        <begin position="1"/>
        <end position="51"/>
    </location>
</feature>
<feature type="region of interest" description="Disordered" evidence="3">
    <location>
        <begin position="70"/>
        <end position="189"/>
    </location>
</feature>
<feature type="compositionally biased region" description="Polar residues" evidence="3">
    <location>
        <begin position="1"/>
        <end position="13"/>
    </location>
</feature>
<feature type="compositionally biased region" description="Polar residues" evidence="3">
    <location>
        <begin position="30"/>
        <end position="48"/>
    </location>
</feature>
<feature type="compositionally biased region" description="Polar residues" evidence="3">
    <location>
        <begin position="73"/>
        <end position="108"/>
    </location>
</feature>
<feature type="compositionally biased region" description="Polar residues" evidence="3">
    <location>
        <begin position="137"/>
        <end position="169"/>
    </location>
</feature>
<feature type="compositionally biased region" description="Polar residues" evidence="3">
    <location>
        <begin position="177"/>
        <end position="189"/>
    </location>
</feature>
<comment type="function">
    <text evidence="1">Meiosis-specific protein required for homologous recombination in meiosis I.</text>
</comment>
<comment type="subunit">
    <text evidence="1 2">Component of a multiprotein complex with MEIOB and RPA2. Interacts with MEIOB (By similarity). Interacts with the complex BRME1:HSF2BP:BRCA2.</text>
</comment>
<comment type="subcellular location">
    <subcellularLocation>
        <location evidence="1">Chromosome</location>
    </subcellularLocation>
    <text evidence="1">Localizes on meiotic chromosome axes. Accumulates on resected DNA. Localization is dependent on MEIOB.</text>
</comment>
<reference key="1">
    <citation type="submission" date="2005-12" db="EMBL/GenBank/DDBJ databases">
        <authorList>
            <consortium name="NIH - Mammalian Gene Collection (MGC) project"/>
        </authorList>
    </citation>
    <scope>NUCLEOTIDE SEQUENCE [LARGE SCALE MRNA]</scope>
    <source>
        <strain>Crossbred X Angus</strain>
        <tissue>Liver</tissue>
    </source>
</reference>
<dbReference type="EMBL" id="BC111158">
    <property type="protein sequence ID" value="AAI11159.1"/>
    <property type="molecule type" value="mRNA"/>
</dbReference>
<dbReference type="RefSeq" id="NP_001033275.1">
    <property type="nucleotide sequence ID" value="NM_001038186.2"/>
</dbReference>
<dbReference type="RefSeq" id="XP_024836116.1">
    <property type="nucleotide sequence ID" value="XM_024980348.2"/>
</dbReference>
<dbReference type="RefSeq" id="XP_059734173.1">
    <property type="nucleotide sequence ID" value="XM_059878190.1"/>
</dbReference>
<dbReference type="RefSeq" id="XP_059734174.1">
    <property type="nucleotide sequence ID" value="XM_059878191.1"/>
</dbReference>
<dbReference type="RefSeq" id="XP_059734175.1">
    <property type="nucleotide sequence ID" value="XM_059878192.1"/>
</dbReference>
<dbReference type="RefSeq" id="XP_059734176.1">
    <property type="nucleotide sequence ID" value="XM_059878193.1"/>
</dbReference>
<dbReference type="FunCoup" id="Q2TA20">
    <property type="interactions" value="23"/>
</dbReference>
<dbReference type="STRING" id="9913.ENSBTAP00000060337"/>
<dbReference type="PaxDb" id="9913-ENSBTAP00000020932"/>
<dbReference type="Ensembl" id="ENSBTAT00000020932.5">
    <property type="protein sequence ID" value="ENSBTAP00000020932.5"/>
    <property type="gene ID" value="ENSBTAG00000015763.6"/>
</dbReference>
<dbReference type="GeneID" id="539692"/>
<dbReference type="KEGG" id="bta:539692"/>
<dbReference type="CTD" id="84690"/>
<dbReference type="VEuPathDB" id="HostDB:ENSBTAG00000015763"/>
<dbReference type="VGNC" id="VGNC:35180">
    <property type="gene designation" value="SPATA22"/>
</dbReference>
<dbReference type="eggNOG" id="ENOG502RNNP">
    <property type="taxonomic scope" value="Eukaryota"/>
</dbReference>
<dbReference type="GeneTree" id="ENSGT00390000018151"/>
<dbReference type="InParanoid" id="Q2TA20"/>
<dbReference type="OMA" id="QDHSPAY"/>
<dbReference type="OrthoDB" id="10028206at2759"/>
<dbReference type="Proteomes" id="UP000009136">
    <property type="component" value="Chromosome 19"/>
</dbReference>
<dbReference type="Bgee" id="ENSBTAG00000015763">
    <property type="expression patterns" value="Expressed in oocyte and 26 other cell types or tissues"/>
</dbReference>
<dbReference type="GO" id="GO:0005694">
    <property type="term" value="C:chromosome"/>
    <property type="evidence" value="ECO:0000250"/>
    <property type="project" value="UniProtKB"/>
</dbReference>
<dbReference type="GO" id="GO:0009566">
    <property type="term" value="P:fertilization"/>
    <property type="evidence" value="ECO:0007669"/>
    <property type="project" value="Ensembl"/>
</dbReference>
<dbReference type="GO" id="GO:0007276">
    <property type="term" value="P:gamete generation"/>
    <property type="evidence" value="ECO:0007669"/>
    <property type="project" value="Ensembl"/>
</dbReference>
<dbReference type="GO" id="GO:0007129">
    <property type="term" value="P:homologous chromosome pairing at meiosis"/>
    <property type="evidence" value="ECO:0007669"/>
    <property type="project" value="Ensembl"/>
</dbReference>
<dbReference type="GO" id="GO:0000711">
    <property type="term" value="P:meiotic DNA repair synthesis"/>
    <property type="evidence" value="ECO:0007669"/>
    <property type="project" value="Ensembl"/>
</dbReference>
<dbReference type="GO" id="GO:0051445">
    <property type="term" value="P:regulation of meiotic cell cycle"/>
    <property type="evidence" value="ECO:0000318"/>
    <property type="project" value="GO_Central"/>
</dbReference>
<dbReference type="GO" id="GO:0061458">
    <property type="term" value="P:reproductive system development"/>
    <property type="evidence" value="ECO:0007669"/>
    <property type="project" value="Ensembl"/>
</dbReference>
<dbReference type="InterPro" id="IPR033536">
    <property type="entry name" value="Spata22"/>
</dbReference>
<dbReference type="PANTHER" id="PTHR35258">
    <property type="entry name" value="SPERMATOGENESIS-ASSOCIATED PROTEIN 22"/>
    <property type="match status" value="1"/>
</dbReference>
<dbReference type="PANTHER" id="PTHR35258:SF1">
    <property type="entry name" value="SPERMATOGENESIS-ASSOCIATED PROTEIN 22"/>
    <property type="match status" value="1"/>
</dbReference>
<proteinExistence type="evidence at transcript level"/>
<keyword id="KW-0158">Chromosome</keyword>
<keyword id="KW-0469">Meiosis</keyword>
<keyword id="KW-1185">Reference proteome</keyword>
<organism>
    <name type="scientific">Bos taurus</name>
    <name type="common">Bovine</name>
    <dbReference type="NCBI Taxonomy" id="9913"/>
    <lineage>
        <taxon>Eukaryota</taxon>
        <taxon>Metazoa</taxon>
        <taxon>Chordata</taxon>
        <taxon>Craniata</taxon>
        <taxon>Vertebrata</taxon>
        <taxon>Euteleostomi</taxon>
        <taxon>Mammalia</taxon>
        <taxon>Eutheria</taxon>
        <taxon>Laurasiatheria</taxon>
        <taxon>Artiodactyla</taxon>
        <taxon>Ruminantia</taxon>
        <taxon>Pecora</taxon>
        <taxon>Bovidae</taxon>
        <taxon>Bovinae</taxon>
        <taxon>Bos</taxon>
    </lineage>
</organism>
<name>SPT22_BOVIN</name>
<accession>Q2TA20</accession>
<gene>
    <name type="primary">SPATA22</name>
</gene>
<evidence type="ECO:0000250" key="1">
    <source>
        <dbReference type="UniProtKB" id="Q5SV06"/>
    </source>
</evidence>
<evidence type="ECO:0000250" key="2">
    <source>
        <dbReference type="UniProtKB" id="Q8NHS9"/>
    </source>
</evidence>
<evidence type="ECO:0000256" key="3">
    <source>
        <dbReference type="SAM" id="MobiDB-lite"/>
    </source>
</evidence>
<protein>
    <recommendedName>
        <fullName>Spermatogenesis-associated protein 22</fullName>
    </recommendedName>
</protein>